<protein>
    <recommendedName>
        <fullName evidence="1">GMP reductase</fullName>
        <ecNumber evidence="1">1.7.1.7</ecNumber>
    </recommendedName>
    <alternativeName>
        <fullName evidence="1">Guanosine 5'-monophosphate oxidoreductase</fullName>
        <shortName evidence="1">Guanosine monophosphate reductase</shortName>
    </alternativeName>
</protein>
<proteinExistence type="inferred from homology"/>
<sequence length="328" mass="35968">MLNEFPIFDYEDIQLIPNKCVIKSRAEADTSVTLGNHTFKLPVVPANMQTILDENVAEQLAKGGYFYIMHRFDEAGRIPFIKRMHDQGLIASISVGVKDYEYDFVRQLKTDAPEYITIDIAHGHADSVISMIQHIKKELPDTFVIAGNVGTPEAVRELENAGADATKVGIGPGKVCITKVKTGFGTGGWQLAALRWCAKAARKPIIADGGIRTHGDIAKSIRFGASMVMIGSLFAGHIESPGKTIEVDGEQFKEYYGSASQYQKGAYKNVEGKRILLPAKGHLQDTLTEMEQDLQSAISYAGGRQVADLKHVDYVIVKNSIWNGDASH</sequence>
<dbReference type="EC" id="1.7.1.7" evidence="1"/>
<dbReference type="EMBL" id="CP000936">
    <property type="protein sequence ID" value="ACA36443.1"/>
    <property type="molecule type" value="Genomic_DNA"/>
</dbReference>
<dbReference type="RefSeq" id="WP_000931159.1">
    <property type="nucleotide sequence ID" value="NC_010380.1"/>
</dbReference>
<dbReference type="SMR" id="B1IC44"/>
<dbReference type="KEGG" id="spv:SPH_1365"/>
<dbReference type="HOGENOM" id="CLU_022552_5_0_9"/>
<dbReference type="Proteomes" id="UP000002163">
    <property type="component" value="Chromosome"/>
</dbReference>
<dbReference type="GO" id="GO:0005829">
    <property type="term" value="C:cytosol"/>
    <property type="evidence" value="ECO:0007669"/>
    <property type="project" value="TreeGrafter"/>
</dbReference>
<dbReference type="GO" id="GO:1902560">
    <property type="term" value="C:GMP reductase complex"/>
    <property type="evidence" value="ECO:0007669"/>
    <property type="project" value="InterPro"/>
</dbReference>
<dbReference type="GO" id="GO:0003920">
    <property type="term" value="F:GMP reductase activity"/>
    <property type="evidence" value="ECO:0007669"/>
    <property type="project" value="UniProtKB-UniRule"/>
</dbReference>
<dbReference type="GO" id="GO:0006163">
    <property type="term" value="P:purine nucleotide metabolic process"/>
    <property type="evidence" value="ECO:0007669"/>
    <property type="project" value="UniProtKB-UniRule"/>
</dbReference>
<dbReference type="CDD" id="cd00381">
    <property type="entry name" value="IMPDH"/>
    <property type="match status" value="1"/>
</dbReference>
<dbReference type="FunFam" id="3.20.20.70:FF:000079">
    <property type="entry name" value="GMP reductase"/>
    <property type="match status" value="1"/>
</dbReference>
<dbReference type="Gene3D" id="3.20.20.70">
    <property type="entry name" value="Aldolase class I"/>
    <property type="match status" value="1"/>
</dbReference>
<dbReference type="HAMAP" id="MF_01511">
    <property type="entry name" value="GMP_reduct_type2"/>
    <property type="match status" value="1"/>
</dbReference>
<dbReference type="InterPro" id="IPR013785">
    <property type="entry name" value="Aldolase_TIM"/>
</dbReference>
<dbReference type="InterPro" id="IPR050139">
    <property type="entry name" value="GMP_reductase"/>
</dbReference>
<dbReference type="InterPro" id="IPR005994">
    <property type="entry name" value="GuaC_type_2"/>
</dbReference>
<dbReference type="InterPro" id="IPR015875">
    <property type="entry name" value="IMP_DH/GMP_Rdtase_CS"/>
</dbReference>
<dbReference type="InterPro" id="IPR001093">
    <property type="entry name" value="IMP_DH_GMPRt"/>
</dbReference>
<dbReference type="NCBIfam" id="TIGR01306">
    <property type="entry name" value="GMP_reduct_2"/>
    <property type="match status" value="1"/>
</dbReference>
<dbReference type="NCBIfam" id="NF003966">
    <property type="entry name" value="PRK05458.1"/>
    <property type="match status" value="1"/>
</dbReference>
<dbReference type="PANTHER" id="PTHR43170">
    <property type="entry name" value="GMP REDUCTASE"/>
    <property type="match status" value="1"/>
</dbReference>
<dbReference type="PANTHER" id="PTHR43170:SF5">
    <property type="entry name" value="GMP REDUCTASE"/>
    <property type="match status" value="1"/>
</dbReference>
<dbReference type="Pfam" id="PF00478">
    <property type="entry name" value="IMPDH"/>
    <property type="match status" value="1"/>
</dbReference>
<dbReference type="PIRSF" id="PIRSF036500">
    <property type="entry name" value="GMP_red_Firmic"/>
    <property type="match status" value="1"/>
</dbReference>
<dbReference type="SMART" id="SM01240">
    <property type="entry name" value="IMPDH"/>
    <property type="match status" value="1"/>
</dbReference>
<dbReference type="SUPFAM" id="SSF51412">
    <property type="entry name" value="Inosine monophosphate dehydrogenase (IMPDH)"/>
    <property type="match status" value="1"/>
</dbReference>
<dbReference type="PROSITE" id="PS00487">
    <property type="entry name" value="IMP_DH_GMP_RED"/>
    <property type="match status" value="1"/>
</dbReference>
<comment type="function">
    <text evidence="1">Catalyzes the irreversible NADPH-dependent deamination of GMP to IMP. It functions in the conversion of nucleobase, nucleoside and nucleotide derivatives of G to A nucleotides, and in maintaining the intracellular balance of A and G nucleotides.</text>
</comment>
<comment type="catalytic activity">
    <reaction evidence="1">
        <text>IMP + NH4(+) + NADP(+) = GMP + NADPH + 2 H(+)</text>
        <dbReference type="Rhea" id="RHEA:17185"/>
        <dbReference type="ChEBI" id="CHEBI:15378"/>
        <dbReference type="ChEBI" id="CHEBI:28938"/>
        <dbReference type="ChEBI" id="CHEBI:57783"/>
        <dbReference type="ChEBI" id="CHEBI:58053"/>
        <dbReference type="ChEBI" id="CHEBI:58115"/>
        <dbReference type="ChEBI" id="CHEBI:58349"/>
        <dbReference type="EC" id="1.7.1.7"/>
    </reaction>
</comment>
<comment type="similarity">
    <text evidence="1">Belongs to the IMPDH/GMPR family. GuaC type 2 subfamily.</text>
</comment>
<name>GUAC_STRPI</name>
<keyword id="KW-0521">NADP</keyword>
<keyword id="KW-0560">Oxidoreductase</keyword>
<organism>
    <name type="scientific">Streptococcus pneumoniae (strain Hungary19A-6)</name>
    <dbReference type="NCBI Taxonomy" id="487214"/>
    <lineage>
        <taxon>Bacteria</taxon>
        <taxon>Bacillati</taxon>
        <taxon>Bacillota</taxon>
        <taxon>Bacilli</taxon>
        <taxon>Lactobacillales</taxon>
        <taxon>Streptococcaceae</taxon>
        <taxon>Streptococcus</taxon>
    </lineage>
</organism>
<reference key="1">
    <citation type="journal article" date="2010" name="Genome Biol.">
        <title>Structure and dynamics of the pan-genome of Streptococcus pneumoniae and closely related species.</title>
        <authorList>
            <person name="Donati C."/>
            <person name="Hiller N.L."/>
            <person name="Tettelin H."/>
            <person name="Muzzi A."/>
            <person name="Croucher N.J."/>
            <person name="Angiuoli S.V."/>
            <person name="Oggioni M."/>
            <person name="Dunning Hotopp J.C."/>
            <person name="Hu F.Z."/>
            <person name="Riley D.R."/>
            <person name="Covacci A."/>
            <person name="Mitchell T.J."/>
            <person name="Bentley S.D."/>
            <person name="Kilian M."/>
            <person name="Ehrlich G.D."/>
            <person name="Rappuoli R."/>
            <person name="Moxon E.R."/>
            <person name="Masignani V."/>
        </authorList>
    </citation>
    <scope>NUCLEOTIDE SEQUENCE [LARGE SCALE GENOMIC DNA]</scope>
    <source>
        <strain>Hungary19A-6</strain>
    </source>
</reference>
<gene>
    <name evidence="1" type="primary">guaC</name>
    <name type="ordered locus">SPH_1365</name>
</gene>
<feature type="chain" id="PRO_1000146142" description="GMP reductase">
    <location>
        <begin position="1"/>
        <end position="328"/>
    </location>
</feature>
<feature type="active site" description="Thioimidate intermediate" evidence="1">
    <location>
        <position position="176"/>
    </location>
</feature>
<feature type="binding site" evidence="1">
    <location>
        <begin position="205"/>
        <end position="228"/>
    </location>
    <ligand>
        <name>NADP(+)</name>
        <dbReference type="ChEBI" id="CHEBI:58349"/>
    </ligand>
</feature>
<accession>B1IC44</accession>
<evidence type="ECO:0000255" key="1">
    <source>
        <dbReference type="HAMAP-Rule" id="MF_01511"/>
    </source>
</evidence>